<name>FKH9_CAEEL</name>
<accession>Q21187</accession>
<accession>Q2L6X6</accession>
<accession>Q7Z136</accession>
<dbReference type="EMBL" id="BX284606">
    <property type="protein sequence ID" value="CCD70485.1"/>
    <property type="molecule type" value="Genomic_DNA"/>
</dbReference>
<dbReference type="EMBL" id="BX284606">
    <property type="protein sequence ID" value="CCD70486.1"/>
    <property type="molecule type" value="Genomic_DNA"/>
</dbReference>
<dbReference type="EMBL" id="BX284606">
    <property type="protein sequence ID" value="CCD70487.1"/>
    <property type="molecule type" value="Genomic_DNA"/>
</dbReference>
<dbReference type="PIR" id="T16544">
    <property type="entry name" value="T16544"/>
</dbReference>
<dbReference type="RefSeq" id="NP_001024760.1">
    <molecule id="Q21187-1"/>
    <property type="nucleotide sequence ID" value="NM_001029589.4"/>
</dbReference>
<dbReference type="RefSeq" id="NP_001024761.1">
    <molecule id="Q21187-2"/>
    <property type="nucleotide sequence ID" value="NM_001029590.7"/>
</dbReference>
<dbReference type="RefSeq" id="NP_001041265.1">
    <property type="nucleotide sequence ID" value="NM_001047800.2"/>
</dbReference>
<dbReference type="RefSeq" id="NP_001379922.1">
    <molecule id="Q21187-3"/>
    <property type="nucleotide sequence ID" value="NM_001392752.1"/>
</dbReference>
<dbReference type="SMR" id="Q21187"/>
<dbReference type="FunCoup" id="Q21187">
    <property type="interactions" value="158"/>
</dbReference>
<dbReference type="STRING" id="6239.K03C7.2a.1"/>
<dbReference type="PaxDb" id="6239-K03C7.2a"/>
<dbReference type="PeptideAtlas" id="Q21187"/>
<dbReference type="EnsemblMetazoa" id="K03C7.2a.1">
    <molecule id="Q21187-1"/>
    <property type="protein sequence ID" value="K03C7.2a.1"/>
    <property type="gene ID" value="WBGene00001441"/>
</dbReference>
<dbReference type="EnsemblMetazoa" id="K03C7.2b.1">
    <molecule id="Q21187-2"/>
    <property type="protein sequence ID" value="K03C7.2b.1"/>
    <property type="gene ID" value="WBGene00001441"/>
</dbReference>
<dbReference type="EnsemblMetazoa" id="K03C7.2c.1">
    <molecule id="Q21187-3"/>
    <property type="protein sequence ID" value="K03C7.2c.1"/>
    <property type="gene ID" value="WBGene00001441"/>
</dbReference>
<dbReference type="EnsemblMetazoa" id="K03C7.2c.2">
    <molecule id="Q21187-3"/>
    <property type="protein sequence ID" value="K03C7.2c.2"/>
    <property type="gene ID" value="WBGene00001441"/>
</dbReference>
<dbReference type="EnsemblMetazoa" id="K03C7.2c.3">
    <molecule id="Q21187-3"/>
    <property type="protein sequence ID" value="K03C7.2c.3"/>
    <property type="gene ID" value="WBGene00001441"/>
</dbReference>
<dbReference type="EnsemblMetazoa" id="K03C7.2c.4">
    <molecule id="Q21187-3"/>
    <property type="protein sequence ID" value="K03C7.2c.4"/>
    <property type="gene ID" value="WBGene00001441"/>
</dbReference>
<dbReference type="GeneID" id="180670"/>
<dbReference type="KEGG" id="cel:CELE_K03C7.2"/>
<dbReference type="UCSC" id="K03C7.2a">
    <property type="organism name" value="c. elegans"/>
</dbReference>
<dbReference type="AGR" id="WB:WBGene00001441"/>
<dbReference type="CTD" id="180670"/>
<dbReference type="WormBase" id="K03C7.2a">
    <molecule id="Q21187-1"/>
    <property type="protein sequence ID" value="CE31196"/>
    <property type="gene ID" value="WBGene00001441"/>
    <property type="gene designation" value="fkh-9"/>
</dbReference>
<dbReference type="WormBase" id="K03C7.2b">
    <molecule id="Q21187-2"/>
    <property type="protein sequence ID" value="CE34332"/>
    <property type="gene ID" value="WBGene00001441"/>
    <property type="gene designation" value="fkh-9"/>
</dbReference>
<dbReference type="WormBase" id="K03C7.2c">
    <molecule id="Q21187-3"/>
    <property type="protein sequence ID" value="CE39581"/>
    <property type="gene ID" value="WBGene00001441"/>
    <property type="gene designation" value="fkh-9"/>
</dbReference>
<dbReference type="eggNOG" id="KOG2294">
    <property type="taxonomic scope" value="Eukaryota"/>
</dbReference>
<dbReference type="HOGENOM" id="CLU_998283_0_0_1"/>
<dbReference type="InParanoid" id="Q21187"/>
<dbReference type="OMA" id="LASTIQM"/>
<dbReference type="OrthoDB" id="5954824at2759"/>
<dbReference type="PRO" id="PR:Q21187"/>
<dbReference type="Proteomes" id="UP000001940">
    <property type="component" value="Chromosome X"/>
</dbReference>
<dbReference type="Bgee" id="WBGene00001441">
    <property type="expression patterns" value="Expressed in larva and 3 other cell types or tissues"/>
</dbReference>
<dbReference type="ExpressionAtlas" id="Q21187">
    <property type="expression patterns" value="baseline and differential"/>
</dbReference>
<dbReference type="GO" id="GO:0005634">
    <property type="term" value="C:nucleus"/>
    <property type="evidence" value="ECO:0000314"/>
    <property type="project" value="UniProtKB"/>
</dbReference>
<dbReference type="GO" id="GO:0000981">
    <property type="term" value="F:DNA-binding transcription factor activity, RNA polymerase II-specific"/>
    <property type="evidence" value="ECO:0000315"/>
    <property type="project" value="UniProtKB"/>
</dbReference>
<dbReference type="GO" id="GO:0000978">
    <property type="term" value="F:RNA polymerase II cis-regulatory region sequence-specific DNA binding"/>
    <property type="evidence" value="ECO:0000314"/>
    <property type="project" value="UniProtKB"/>
</dbReference>
<dbReference type="GO" id="GO:0009653">
    <property type="term" value="P:anatomical structure morphogenesis"/>
    <property type="evidence" value="ECO:0000318"/>
    <property type="project" value="GO_Central"/>
</dbReference>
<dbReference type="GO" id="GO:0031103">
    <property type="term" value="P:axon regeneration"/>
    <property type="evidence" value="ECO:0000316"/>
    <property type="project" value="WormBase"/>
</dbReference>
<dbReference type="GO" id="GO:0030154">
    <property type="term" value="P:cell differentiation"/>
    <property type="evidence" value="ECO:0000318"/>
    <property type="project" value="GO_Central"/>
</dbReference>
<dbReference type="GO" id="GO:0098542">
    <property type="term" value="P:defense response to other organism"/>
    <property type="evidence" value="ECO:0000316"/>
    <property type="project" value="UniProtKB"/>
</dbReference>
<dbReference type="GO" id="GO:0008340">
    <property type="term" value="P:determination of adult lifespan"/>
    <property type="evidence" value="ECO:0000316"/>
    <property type="project" value="WormBase"/>
</dbReference>
<dbReference type="GO" id="GO:0036503">
    <property type="term" value="P:ERAD pathway"/>
    <property type="evidence" value="ECO:0000315"/>
    <property type="project" value="UniProtKB"/>
</dbReference>
<dbReference type="GO" id="GO:0007612">
    <property type="term" value="P:learning"/>
    <property type="evidence" value="ECO:0000316"/>
    <property type="project" value="WormBase"/>
</dbReference>
<dbReference type="GO" id="GO:0045944">
    <property type="term" value="P:positive regulation of transcription by RNA polymerase II"/>
    <property type="evidence" value="ECO:0000315"/>
    <property type="project" value="UniProtKB"/>
</dbReference>
<dbReference type="GO" id="GO:0010498">
    <property type="term" value="P:proteasomal protein catabolic process"/>
    <property type="evidence" value="ECO:0000315"/>
    <property type="project" value="UniProtKB"/>
</dbReference>
<dbReference type="GO" id="GO:0006357">
    <property type="term" value="P:regulation of transcription by RNA polymerase II"/>
    <property type="evidence" value="ECO:0000318"/>
    <property type="project" value="GO_Central"/>
</dbReference>
<dbReference type="GO" id="GO:0034976">
    <property type="term" value="P:response to endoplasmic reticulum stress"/>
    <property type="evidence" value="ECO:0000316"/>
    <property type="project" value="UniProtKB"/>
</dbReference>
<dbReference type="GO" id="GO:0007614">
    <property type="term" value="P:short-term memory"/>
    <property type="evidence" value="ECO:0000316"/>
    <property type="project" value="WormBase"/>
</dbReference>
<dbReference type="CDD" id="cd00059">
    <property type="entry name" value="FH_FOX"/>
    <property type="match status" value="1"/>
</dbReference>
<dbReference type="Gene3D" id="1.10.10.10">
    <property type="entry name" value="Winged helix-like DNA-binding domain superfamily/Winged helix DNA-binding domain"/>
    <property type="match status" value="1"/>
</dbReference>
<dbReference type="InterPro" id="IPR001766">
    <property type="entry name" value="Fork_head_dom"/>
</dbReference>
<dbReference type="InterPro" id="IPR050211">
    <property type="entry name" value="FOX_domain-containing"/>
</dbReference>
<dbReference type="InterPro" id="IPR030456">
    <property type="entry name" value="TF_fork_head_CS_2"/>
</dbReference>
<dbReference type="InterPro" id="IPR036388">
    <property type="entry name" value="WH-like_DNA-bd_sf"/>
</dbReference>
<dbReference type="InterPro" id="IPR036390">
    <property type="entry name" value="WH_DNA-bd_sf"/>
</dbReference>
<dbReference type="PANTHER" id="PTHR11829">
    <property type="entry name" value="FORKHEAD BOX PROTEIN"/>
    <property type="match status" value="1"/>
</dbReference>
<dbReference type="PANTHER" id="PTHR11829:SF411">
    <property type="entry name" value="FORKHEAD BOX PROTEIN L2"/>
    <property type="match status" value="1"/>
</dbReference>
<dbReference type="Pfam" id="PF00250">
    <property type="entry name" value="Forkhead"/>
    <property type="match status" value="1"/>
</dbReference>
<dbReference type="PRINTS" id="PR00053">
    <property type="entry name" value="FORKHEAD"/>
</dbReference>
<dbReference type="SMART" id="SM00339">
    <property type="entry name" value="FH"/>
    <property type="match status" value="1"/>
</dbReference>
<dbReference type="SUPFAM" id="SSF46785">
    <property type="entry name" value="Winged helix' DNA-binding domain"/>
    <property type="match status" value="1"/>
</dbReference>
<dbReference type="PROSITE" id="PS00658">
    <property type="entry name" value="FORK_HEAD_2"/>
    <property type="match status" value="1"/>
</dbReference>
<dbReference type="PROSITE" id="PS50039">
    <property type="entry name" value="FORK_HEAD_3"/>
    <property type="match status" value="1"/>
</dbReference>
<gene>
    <name evidence="8" type="primary">fkh-9</name>
    <name evidence="8" type="ORF">K03C7.2</name>
</gene>
<comment type="function">
    <text evidence="3 4 5">Transcription factor (PubMed:26963674). Binds to the regulatory elements of genes that contain the sequence motif 5'-TTGTTTCT-3' (PubMed:26963674). Involved in regulating intestinal transcription of vitellogenin vit-2, acting in concert with transcription factors elt-2, mab-3 and daf-16, and also the TGF-beta/Sma/Mab pathway (PubMed:26963674). Functions downstream of the insulin/IGF-1-like signaling (IIS) mediated pathway, in regeneration of axons after injury and in short-term memory, perhaps acting in neurons, and in modulation of longevity, perhaps acting non-neuronally (PubMed:26675724). Plays a role in the modulation of endoplasmic reticulum (ER) homeostasis during chemical and pathogen stress, including exposure to the Gram-negative bacterium P.aeruginosa (PubMed:30287474).</text>
</comment>
<comment type="subcellular location">
    <subcellularLocation>
        <location evidence="1 3 5">Nucleus</location>
    </subcellularLocation>
</comment>
<comment type="alternative products">
    <event type="alternative splicing"/>
    <isoform>
        <id>Q21187-1</id>
        <name evidence="8">a</name>
        <sequence type="displayed"/>
    </isoform>
    <isoform>
        <id>Q21187-2</id>
        <name evidence="9">b</name>
        <sequence type="described" ref="VSP_061276"/>
    </isoform>
    <isoform>
        <id>Q21187-3</id>
        <name evidence="10">c</name>
        <sequence type="described" ref="VSP_061275"/>
    </isoform>
</comment>
<comment type="tissue specificity">
    <text evidence="3">Expressed in mechanosensory neurons.</text>
</comment>
<comment type="developmental stage">
    <text evidence="5">Expressed in neurons and intestinal cells in L2 stage larvae.</text>
</comment>
<comment type="disruption phenotype">
    <text evidence="3">RNAi-mediated knockdown severely impairs axon regeneration in a daf-2 mutant background, in a daf-16-dependent-manner (PubMed:26675724). Impairs short-term associative memory in a daf-2 mutant background in a daf-16-dependent-manner (PubMed:26675724). Reduces longevity in a daf-2 mutant background (PubMed:26675724).</text>
</comment>
<reference evidence="7" key="1">
    <citation type="journal article" date="1998" name="Science">
        <title>Genome sequence of the nematode C. elegans: a platform for investigating biology.</title>
        <authorList>
            <consortium name="The C. elegans sequencing consortium"/>
        </authorList>
    </citation>
    <scope>NUCLEOTIDE SEQUENCE [LARGE SCALE GENOMIC DNA]</scope>
    <source>
        <strain evidence="7">Bristol N2</strain>
    </source>
</reference>
<reference evidence="6" key="2">
    <citation type="journal article" date="2016" name="Dev. Biol.">
        <title>A 44 bp intestine-specific hermaphrodite-specific enhancer from the C. elegans vit-2 vitellogenin gene is directly regulated by ELT-2, MAB-3, FKH-9 and DAF-16 and indirectly regulated by the germline, by daf-2/insulin signaling and by the TGF-beta/Sma/Mab pathway.</title>
        <authorList>
            <person name="Goszczynski B."/>
            <person name="Captan V.V."/>
            <person name="Danielson A.M."/>
            <person name="Lancaster B.R."/>
            <person name="McGhee J.D."/>
        </authorList>
    </citation>
    <scope>FUNCTION</scope>
</reference>
<reference evidence="6" key="3">
    <citation type="journal article" date="2016" name="Nature">
        <title>The C. elegans adult neuronal IIS/FOXO transcriptome reveals adult phenotype regulators.</title>
        <authorList>
            <person name="Kaletsky R."/>
            <person name="Lakhina V."/>
            <person name="Arey R."/>
            <person name="Williams A."/>
            <person name="Landis J."/>
            <person name="Ashraf J."/>
            <person name="Murphy C.T."/>
        </authorList>
    </citation>
    <scope>FUNCTION</scope>
    <scope>SUBCELLULAR LOCATION</scope>
    <scope>TISSUE SPECIFICITY</scope>
    <scope>DISRUPTION PHENOTYPE</scope>
</reference>
<reference evidence="6" key="4">
    <citation type="journal article" date="2018" name="Genetics">
        <title>Endoplasmic Reticulum Homeostasis Is Modulated by the Forkhead Transcription Factor FKH-9 During Infection of Caenorhabditis elegans.</title>
        <authorList>
            <person name="Tillman E.J."/>
            <person name="Richardson C.E."/>
            <person name="Cattie D.J."/>
            <person name="Reddy K.C."/>
            <person name="Lehrbach N.J."/>
            <person name="Droste R."/>
            <person name="Ruvkun G."/>
            <person name="Kim D.H."/>
        </authorList>
    </citation>
    <scope>FUNCTION</scope>
    <scope>SUBCELLULAR LOCATION</scope>
    <scope>DEVELOPMENTAL STAGE</scope>
    <scope>MUTAGENESIS OF GLY-111</scope>
</reference>
<protein>
    <recommendedName>
        <fullName evidence="8">Forkhead transcription factor fkh-9</fullName>
    </recommendedName>
</protein>
<keyword id="KW-0025">Alternative splicing</keyword>
<keyword id="KW-0238">DNA-binding</keyword>
<keyword id="KW-0539">Nucleus</keyword>
<keyword id="KW-1185">Reference proteome</keyword>
<evidence type="ECO:0000255" key="1">
    <source>
        <dbReference type="PROSITE-ProRule" id="PRU00089"/>
    </source>
</evidence>
<evidence type="ECO:0000256" key="2">
    <source>
        <dbReference type="SAM" id="MobiDB-lite"/>
    </source>
</evidence>
<evidence type="ECO:0000269" key="3">
    <source>
    </source>
</evidence>
<evidence type="ECO:0000269" key="4">
    <source>
    </source>
</evidence>
<evidence type="ECO:0000269" key="5">
    <source>
    </source>
</evidence>
<evidence type="ECO:0000305" key="6"/>
<evidence type="ECO:0000312" key="7">
    <source>
        <dbReference type="Proteomes" id="UP000001940"/>
    </source>
</evidence>
<evidence type="ECO:0000312" key="8">
    <source>
        <dbReference type="WormBase" id="K03C7.2a"/>
    </source>
</evidence>
<evidence type="ECO:0000312" key="9">
    <source>
        <dbReference type="WormBase" id="K03C7.2b"/>
    </source>
</evidence>
<evidence type="ECO:0000312" key="10">
    <source>
        <dbReference type="WormBase" id="K03C7.2c"/>
    </source>
</evidence>
<organism evidence="7">
    <name type="scientific">Caenorhabditis elegans</name>
    <dbReference type="NCBI Taxonomy" id="6239"/>
    <lineage>
        <taxon>Eukaryota</taxon>
        <taxon>Metazoa</taxon>
        <taxon>Ecdysozoa</taxon>
        <taxon>Nematoda</taxon>
        <taxon>Chromadorea</taxon>
        <taxon>Rhabditida</taxon>
        <taxon>Rhabditina</taxon>
        <taxon>Rhabditomorpha</taxon>
        <taxon>Rhabditoidea</taxon>
        <taxon>Rhabditidae</taxon>
        <taxon>Peloderinae</taxon>
        <taxon>Caenorhabditis</taxon>
    </lineage>
</organism>
<proteinExistence type="evidence at protein level"/>
<sequence>MCSTMTATMNQTICEKQNITMDLLRSPIQIPSASDTIKIETPSTISSQPSPIQTPLAAASSDNFERPSLSYKDLIIEAIDRSPEKRLKLNEIYQVIRLLHPYYRHRPDQWGWQNSIRHNLSLHDCFVKLPLKQTSASGVVGHFWTVVPELSDKQTLRRRNRQQPRALAKKSDAGRTLSRDDRGSSGSGETSPSPSQPSISPPNENPMPSVQALNVLELLSGMNDYKGTLFQNNYRTNLIQDNSAVNGLQNLLTTTLMQINPQLGALLSLANLNNLTTNQLQIASPSLSPIKAESQSFLLQ</sequence>
<feature type="chain" id="PRO_0000454295" description="Forkhead transcription factor fkh-9">
    <location>
        <begin position="1"/>
        <end position="300"/>
    </location>
</feature>
<feature type="DNA-binding region" description="Fork-head" evidence="1">
    <location>
        <begin position="66"/>
        <end position="161"/>
    </location>
</feature>
<feature type="region of interest" description="Disordered" evidence="2">
    <location>
        <begin position="153"/>
        <end position="208"/>
    </location>
</feature>
<feature type="compositionally biased region" description="Basic and acidic residues" evidence="2">
    <location>
        <begin position="169"/>
        <end position="183"/>
    </location>
</feature>
<feature type="compositionally biased region" description="Low complexity" evidence="2">
    <location>
        <begin position="187"/>
        <end position="198"/>
    </location>
</feature>
<feature type="splice variant" id="VSP_061275" description="In isoform c." evidence="6">
    <location>
        <begin position="1"/>
        <end position="206"/>
    </location>
</feature>
<feature type="splice variant" id="VSP_061276" description="In isoform b." evidence="6">
    <location>
        <begin position="1"/>
        <end position="20"/>
    </location>
</feature>
<feature type="mutagenesis site" description="In qd197; suppresses larval lethality and defects in the endoplasmic reticulum (ER) in an xbp-1 mutant background, when exposed to the Gram-negative bacterium P.aeruginosa. Enhances resistance to tunicamycin, probably as a result of enhanced ER stress resistance. Enhances sensitivity to proteasome inhibition." evidence="5">
    <original>G</original>
    <variation>E</variation>
    <location>
        <position position="111"/>
    </location>
</feature>